<organism>
    <name type="scientific">Cereibacter sphaeroides (strain ATCC 17023 / DSM 158 / JCM 6121 / CCUG 31486 / LMG 2827 / NBRC 12203 / NCIMB 8253 / ATH 2.4.1.)</name>
    <name type="common">Rhodobacter sphaeroides</name>
    <dbReference type="NCBI Taxonomy" id="272943"/>
    <lineage>
        <taxon>Bacteria</taxon>
        <taxon>Pseudomonadati</taxon>
        <taxon>Pseudomonadota</taxon>
        <taxon>Alphaproteobacteria</taxon>
        <taxon>Rhodobacterales</taxon>
        <taxon>Paracoccaceae</taxon>
        <taxon>Cereibacter</taxon>
    </lineage>
</organism>
<evidence type="ECO:0000255" key="1">
    <source>
        <dbReference type="HAMAP-Rule" id="MF_01307"/>
    </source>
</evidence>
<evidence type="ECO:0000256" key="2">
    <source>
        <dbReference type="SAM" id="MobiDB-lite"/>
    </source>
</evidence>
<evidence type="ECO:0000305" key="3"/>
<gene>
    <name evidence="1" type="primary">rpsE</name>
    <name type="ordered locus">RHOS4_03110</name>
    <name type="ORF">RSP_1732</name>
</gene>
<accession>Q3J5Q5</accession>
<protein>
    <recommendedName>
        <fullName evidence="1">Small ribosomal subunit protein uS5</fullName>
    </recommendedName>
    <alternativeName>
        <fullName evidence="3">30S ribosomal protein S5</fullName>
    </alternativeName>
</protein>
<comment type="function">
    <text evidence="1">With S4 and S12 plays an important role in translational accuracy.</text>
</comment>
<comment type="function">
    <text evidence="1">Located at the back of the 30S subunit body where it stabilizes the conformation of the head with respect to the body.</text>
</comment>
<comment type="subunit">
    <text evidence="1">Part of the 30S ribosomal subunit. Contacts proteins S4 and S8.</text>
</comment>
<comment type="domain">
    <text>The N-terminal domain interacts with the head of the 30S subunit; the C-terminal domain interacts with the body and contacts protein S4. The interaction surface between S4 and S5 is involved in control of translational fidelity.</text>
</comment>
<comment type="similarity">
    <text evidence="1">Belongs to the universal ribosomal protein uS5 family.</text>
</comment>
<name>RS5_CERS4</name>
<proteinExistence type="inferred from homology"/>
<dbReference type="EMBL" id="CP000143">
    <property type="protein sequence ID" value="ABA77879.1"/>
    <property type="molecule type" value="Genomic_DNA"/>
</dbReference>
<dbReference type="RefSeq" id="WP_002722522.1">
    <property type="nucleotide sequence ID" value="NZ_CP030271.1"/>
</dbReference>
<dbReference type="RefSeq" id="YP_351780.1">
    <property type="nucleotide sequence ID" value="NC_007493.2"/>
</dbReference>
<dbReference type="SMR" id="Q3J5Q5"/>
<dbReference type="STRING" id="272943.RSP_1732"/>
<dbReference type="EnsemblBacteria" id="ABA77879">
    <property type="protein sequence ID" value="ABA77879"/>
    <property type="gene ID" value="RSP_1732"/>
</dbReference>
<dbReference type="GeneID" id="67445517"/>
<dbReference type="KEGG" id="rsp:RSP_1732"/>
<dbReference type="PATRIC" id="fig|272943.9.peg.610"/>
<dbReference type="eggNOG" id="COG0098">
    <property type="taxonomic scope" value="Bacteria"/>
</dbReference>
<dbReference type="OrthoDB" id="9809045at2"/>
<dbReference type="PhylomeDB" id="Q3J5Q5"/>
<dbReference type="Proteomes" id="UP000002703">
    <property type="component" value="Chromosome 1"/>
</dbReference>
<dbReference type="GO" id="GO:0015935">
    <property type="term" value="C:small ribosomal subunit"/>
    <property type="evidence" value="ECO:0007669"/>
    <property type="project" value="InterPro"/>
</dbReference>
<dbReference type="GO" id="GO:0019843">
    <property type="term" value="F:rRNA binding"/>
    <property type="evidence" value="ECO:0007669"/>
    <property type="project" value="UniProtKB-UniRule"/>
</dbReference>
<dbReference type="GO" id="GO:0003735">
    <property type="term" value="F:structural constituent of ribosome"/>
    <property type="evidence" value="ECO:0007669"/>
    <property type="project" value="InterPro"/>
</dbReference>
<dbReference type="GO" id="GO:0006412">
    <property type="term" value="P:translation"/>
    <property type="evidence" value="ECO:0007669"/>
    <property type="project" value="UniProtKB-UniRule"/>
</dbReference>
<dbReference type="FunFam" id="3.30.160.20:FF:000001">
    <property type="entry name" value="30S ribosomal protein S5"/>
    <property type="match status" value="1"/>
</dbReference>
<dbReference type="FunFam" id="3.30.230.10:FF:000002">
    <property type="entry name" value="30S ribosomal protein S5"/>
    <property type="match status" value="1"/>
</dbReference>
<dbReference type="Gene3D" id="3.30.160.20">
    <property type="match status" value="1"/>
</dbReference>
<dbReference type="Gene3D" id="3.30.230.10">
    <property type="match status" value="1"/>
</dbReference>
<dbReference type="HAMAP" id="MF_01307_B">
    <property type="entry name" value="Ribosomal_uS5_B"/>
    <property type="match status" value="1"/>
</dbReference>
<dbReference type="InterPro" id="IPR020568">
    <property type="entry name" value="Ribosomal_Su5_D2-typ_SF"/>
</dbReference>
<dbReference type="InterPro" id="IPR000851">
    <property type="entry name" value="Ribosomal_uS5"/>
</dbReference>
<dbReference type="InterPro" id="IPR005712">
    <property type="entry name" value="Ribosomal_uS5_bac-type"/>
</dbReference>
<dbReference type="InterPro" id="IPR005324">
    <property type="entry name" value="Ribosomal_uS5_C"/>
</dbReference>
<dbReference type="InterPro" id="IPR013810">
    <property type="entry name" value="Ribosomal_uS5_N"/>
</dbReference>
<dbReference type="InterPro" id="IPR018192">
    <property type="entry name" value="Ribosomal_uS5_N_CS"/>
</dbReference>
<dbReference type="InterPro" id="IPR014721">
    <property type="entry name" value="Ribsml_uS5_D2-typ_fold_subgr"/>
</dbReference>
<dbReference type="NCBIfam" id="TIGR01021">
    <property type="entry name" value="rpsE_bact"/>
    <property type="match status" value="1"/>
</dbReference>
<dbReference type="PANTHER" id="PTHR48277">
    <property type="entry name" value="MITOCHONDRIAL RIBOSOMAL PROTEIN S5"/>
    <property type="match status" value="1"/>
</dbReference>
<dbReference type="PANTHER" id="PTHR48277:SF1">
    <property type="entry name" value="MITOCHONDRIAL RIBOSOMAL PROTEIN S5"/>
    <property type="match status" value="1"/>
</dbReference>
<dbReference type="Pfam" id="PF00333">
    <property type="entry name" value="Ribosomal_S5"/>
    <property type="match status" value="1"/>
</dbReference>
<dbReference type="Pfam" id="PF03719">
    <property type="entry name" value="Ribosomal_S5_C"/>
    <property type="match status" value="1"/>
</dbReference>
<dbReference type="SUPFAM" id="SSF54768">
    <property type="entry name" value="dsRNA-binding domain-like"/>
    <property type="match status" value="1"/>
</dbReference>
<dbReference type="SUPFAM" id="SSF54211">
    <property type="entry name" value="Ribosomal protein S5 domain 2-like"/>
    <property type="match status" value="1"/>
</dbReference>
<dbReference type="PROSITE" id="PS00585">
    <property type="entry name" value="RIBOSOMAL_S5"/>
    <property type="match status" value="1"/>
</dbReference>
<dbReference type="PROSITE" id="PS50881">
    <property type="entry name" value="S5_DSRBD"/>
    <property type="match status" value="1"/>
</dbReference>
<reference key="1">
    <citation type="submission" date="2005-09" db="EMBL/GenBank/DDBJ databases">
        <title>Complete sequence of chromosome 1 of Rhodobacter sphaeroides 2.4.1.</title>
        <authorList>
            <person name="Copeland A."/>
            <person name="Lucas S."/>
            <person name="Lapidus A."/>
            <person name="Barry K."/>
            <person name="Detter J.C."/>
            <person name="Glavina T."/>
            <person name="Hammon N."/>
            <person name="Israni S."/>
            <person name="Pitluck S."/>
            <person name="Richardson P."/>
            <person name="Mackenzie C."/>
            <person name="Choudhary M."/>
            <person name="Larimer F."/>
            <person name="Hauser L.J."/>
            <person name="Land M."/>
            <person name="Donohue T.J."/>
            <person name="Kaplan S."/>
        </authorList>
    </citation>
    <scope>NUCLEOTIDE SEQUENCE [LARGE SCALE GENOMIC DNA]</scope>
    <source>
        <strain>ATCC 17023 / DSM 158 / JCM 6121 / CCUG 31486 / LMG 2827 / NBRC 12203 / NCIMB 8253 / ATH 2.4.1.</strain>
    </source>
</reference>
<keyword id="KW-1185">Reference proteome</keyword>
<keyword id="KW-0687">Ribonucleoprotein</keyword>
<keyword id="KW-0689">Ribosomal protein</keyword>
<keyword id="KW-0694">RNA-binding</keyword>
<keyword id="KW-0699">rRNA-binding</keyword>
<feature type="chain" id="PRO_0000230366" description="Small ribosomal subunit protein uS5">
    <location>
        <begin position="1"/>
        <end position="187"/>
    </location>
</feature>
<feature type="domain" description="S5 DRBM" evidence="1">
    <location>
        <begin position="22"/>
        <end position="85"/>
    </location>
</feature>
<feature type="region of interest" description="Disordered" evidence="2">
    <location>
        <begin position="1"/>
        <end position="20"/>
    </location>
</feature>
<sequence>MAERENRRDRRDDRSREETPEFADRLVAINRVSKTVKGGKRFGFAALVVVGDQRGRVGFGKGKAKEVPEAIRKATEQAKRQMIRVALRDGRTLHHDQEGRHGAGKVVMRAAVPGTGIIAGGPMRAVFEMLGIQDVVAKSLGSQNPYNMIRATMDGLKRESSPRQVAQRRGKKVADILKKPEAEVAEA</sequence>